<protein>
    <recommendedName>
        <fullName evidence="1">Aminomethyltransferase</fullName>
        <ecNumber evidence="1">2.1.2.10</ecNumber>
    </recommendedName>
    <alternativeName>
        <fullName evidence="1">Glycine cleavage system T protein</fullName>
    </alternativeName>
</protein>
<dbReference type="EC" id="2.1.2.10" evidence="1"/>
<dbReference type="EMBL" id="BA000019">
    <property type="protein sequence ID" value="BAB76308.1"/>
    <property type="molecule type" value="Genomic_DNA"/>
</dbReference>
<dbReference type="PIR" id="AI2381">
    <property type="entry name" value="AI2381"/>
</dbReference>
<dbReference type="RefSeq" id="WP_010998740.1">
    <property type="nucleotide sequence ID" value="NZ_RSCN01000007.1"/>
</dbReference>
<dbReference type="SMR" id="Q8YNF7"/>
<dbReference type="STRING" id="103690.gene:10496659"/>
<dbReference type="KEGG" id="ana:all4609"/>
<dbReference type="eggNOG" id="COG0404">
    <property type="taxonomic scope" value="Bacteria"/>
</dbReference>
<dbReference type="OrthoDB" id="9774591at2"/>
<dbReference type="Proteomes" id="UP000002483">
    <property type="component" value="Chromosome"/>
</dbReference>
<dbReference type="GO" id="GO:0005829">
    <property type="term" value="C:cytosol"/>
    <property type="evidence" value="ECO:0007669"/>
    <property type="project" value="TreeGrafter"/>
</dbReference>
<dbReference type="GO" id="GO:0005960">
    <property type="term" value="C:glycine cleavage complex"/>
    <property type="evidence" value="ECO:0007669"/>
    <property type="project" value="InterPro"/>
</dbReference>
<dbReference type="GO" id="GO:0004047">
    <property type="term" value="F:aminomethyltransferase activity"/>
    <property type="evidence" value="ECO:0007669"/>
    <property type="project" value="UniProtKB-UniRule"/>
</dbReference>
<dbReference type="GO" id="GO:0008483">
    <property type="term" value="F:transaminase activity"/>
    <property type="evidence" value="ECO:0007669"/>
    <property type="project" value="UniProtKB-KW"/>
</dbReference>
<dbReference type="GO" id="GO:0019464">
    <property type="term" value="P:glycine decarboxylation via glycine cleavage system"/>
    <property type="evidence" value="ECO:0007669"/>
    <property type="project" value="UniProtKB-UniRule"/>
</dbReference>
<dbReference type="FunFam" id="2.40.30.110:FF:000003">
    <property type="entry name" value="Aminomethyltransferase"/>
    <property type="match status" value="1"/>
</dbReference>
<dbReference type="FunFam" id="3.30.70.1400:FF:000001">
    <property type="entry name" value="Aminomethyltransferase"/>
    <property type="match status" value="1"/>
</dbReference>
<dbReference type="FunFam" id="4.10.1250.10:FF:000001">
    <property type="entry name" value="Aminomethyltransferase"/>
    <property type="match status" value="1"/>
</dbReference>
<dbReference type="Gene3D" id="2.40.30.110">
    <property type="entry name" value="Aminomethyltransferase beta-barrel domains"/>
    <property type="match status" value="1"/>
</dbReference>
<dbReference type="Gene3D" id="3.30.70.1400">
    <property type="entry name" value="Aminomethyltransferase beta-barrel domains"/>
    <property type="match status" value="1"/>
</dbReference>
<dbReference type="Gene3D" id="4.10.1250.10">
    <property type="entry name" value="Aminomethyltransferase fragment"/>
    <property type="match status" value="1"/>
</dbReference>
<dbReference type="Gene3D" id="3.30.1360.120">
    <property type="entry name" value="Probable tRNA modification gtpase trme, domain 1"/>
    <property type="match status" value="1"/>
</dbReference>
<dbReference type="HAMAP" id="MF_00259">
    <property type="entry name" value="GcvT"/>
    <property type="match status" value="1"/>
</dbReference>
<dbReference type="InterPro" id="IPR006223">
    <property type="entry name" value="GCS_T"/>
</dbReference>
<dbReference type="InterPro" id="IPR022903">
    <property type="entry name" value="GCS_T_bac"/>
</dbReference>
<dbReference type="InterPro" id="IPR013977">
    <property type="entry name" value="GCST_C"/>
</dbReference>
<dbReference type="InterPro" id="IPR006222">
    <property type="entry name" value="GCV_T_N"/>
</dbReference>
<dbReference type="InterPro" id="IPR028896">
    <property type="entry name" value="GcvT/YgfZ/DmdA"/>
</dbReference>
<dbReference type="InterPro" id="IPR029043">
    <property type="entry name" value="GcvT/YgfZ_C"/>
</dbReference>
<dbReference type="InterPro" id="IPR027266">
    <property type="entry name" value="TrmE/GcvT_dom1"/>
</dbReference>
<dbReference type="NCBIfam" id="TIGR00528">
    <property type="entry name" value="gcvT"/>
    <property type="match status" value="1"/>
</dbReference>
<dbReference type="NCBIfam" id="NF001567">
    <property type="entry name" value="PRK00389.1"/>
    <property type="match status" value="1"/>
</dbReference>
<dbReference type="PANTHER" id="PTHR43757">
    <property type="entry name" value="AMINOMETHYLTRANSFERASE"/>
    <property type="match status" value="1"/>
</dbReference>
<dbReference type="PANTHER" id="PTHR43757:SF2">
    <property type="entry name" value="AMINOMETHYLTRANSFERASE, MITOCHONDRIAL"/>
    <property type="match status" value="1"/>
</dbReference>
<dbReference type="Pfam" id="PF01571">
    <property type="entry name" value="GCV_T"/>
    <property type="match status" value="1"/>
</dbReference>
<dbReference type="Pfam" id="PF08669">
    <property type="entry name" value="GCV_T_C"/>
    <property type="match status" value="1"/>
</dbReference>
<dbReference type="PIRSF" id="PIRSF006487">
    <property type="entry name" value="GcvT"/>
    <property type="match status" value="1"/>
</dbReference>
<dbReference type="SUPFAM" id="SSF101790">
    <property type="entry name" value="Aminomethyltransferase beta-barrel domain"/>
    <property type="match status" value="1"/>
</dbReference>
<dbReference type="SUPFAM" id="SSF103025">
    <property type="entry name" value="Folate-binding domain"/>
    <property type="match status" value="1"/>
</dbReference>
<feature type="chain" id="PRO_0000122533" description="Aminomethyltransferase">
    <location>
        <begin position="1"/>
        <end position="376"/>
    </location>
</feature>
<reference key="1">
    <citation type="journal article" date="2001" name="DNA Res.">
        <title>Complete genomic sequence of the filamentous nitrogen-fixing cyanobacterium Anabaena sp. strain PCC 7120.</title>
        <authorList>
            <person name="Kaneko T."/>
            <person name="Nakamura Y."/>
            <person name="Wolk C.P."/>
            <person name="Kuritz T."/>
            <person name="Sasamoto S."/>
            <person name="Watanabe A."/>
            <person name="Iriguchi M."/>
            <person name="Ishikawa A."/>
            <person name="Kawashima K."/>
            <person name="Kimura T."/>
            <person name="Kishida Y."/>
            <person name="Kohara M."/>
            <person name="Matsumoto M."/>
            <person name="Matsuno A."/>
            <person name="Muraki A."/>
            <person name="Nakazaki N."/>
            <person name="Shimpo S."/>
            <person name="Sugimoto M."/>
            <person name="Takazawa M."/>
            <person name="Yamada M."/>
            <person name="Yasuda M."/>
            <person name="Tabata S."/>
        </authorList>
    </citation>
    <scope>NUCLEOTIDE SEQUENCE [LARGE SCALE GENOMIC DNA]</scope>
    <source>
        <strain>PCC 7120 / SAG 25.82 / UTEX 2576</strain>
    </source>
</reference>
<organism>
    <name type="scientific">Nostoc sp. (strain PCC 7120 / SAG 25.82 / UTEX 2576)</name>
    <dbReference type="NCBI Taxonomy" id="103690"/>
    <lineage>
        <taxon>Bacteria</taxon>
        <taxon>Bacillati</taxon>
        <taxon>Cyanobacteriota</taxon>
        <taxon>Cyanophyceae</taxon>
        <taxon>Nostocales</taxon>
        <taxon>Nostocaceae</taxon>
        <taxon>Nostoc</taxon>
    </lineage>
</organism>
<sequence length="376" mass="40775">MANQKDTAETLARTPLYQLGVELKARLTSFGGWEMPVQFSGITREHEAVRNAAGMFDISHMGKFTLQGKNLISQLQGLVPSDLSRLQPGQAQYTVLLNPQGGIIDDIIVYYQGEDNTGTQQAFIIVNAATTSKDKAWILSHLDQNQVQFQDISPAKVLIAIQGPKAIGYLQPFVQQNLQPIKAFGHLEATVLGQAGFIARTGYTGEDGFEILVDPEVGVELWRSLYDAGVIPCGLGARDTLRLEAAMALYGQDIDDNTTPLEAGLGWLVHLDTKGDFIGRSVLEQQKATGVQRRLIGLQTQGRNIARHGYQVLSDGKVVGGVTSGTLSPTLGYPVALAYVPSKLAKVGQPLEVEIRGKAYPAVVVKRPFYRSSNKG</sequence>
<gene>
    <name evidence="1" type="primary">gcvT</name>
    <name type="ordered locus">all4609</name>
</gene>
<keyword id="KW-0032">Aminotransferase</keyword>
<keyword id="KW-1185">Reference proteome</keyword>
<keyword id="KW-0808">Transferase</keyword>
<accession>Q8YNF7</accession>
<comment type="function">
    <text evidence="1">The glycine cleavage system catalyzes the degradation of glycine.</text>
</comment>
<comment type="catalytic activity">
    <reaction evidence="1">
        <text>N(6)-[(R)-S(8)-aminomethyldihydrolipoyl]-L-lysyl-[protein] + (6S)-5,6,7,8-tetrahydrofolate = N(6)-[(R)-dihydrolipoyl]-L-lysyl-[protein] + (6R)-5,10-methylene-5,6,7,8-tetrahydrofolate + NH4(+)</text>
        <dbReference type="Rhea" id="RHEA:16945"/>
        <dbReference type="Rhea" id="RHEA-COMP:10475"/>
        <dbReference type="Rhea" id="RHEA-COMP:10492"/>
        <dbReference type="ChEBI" id="CHEBI:15636"/>
        <dbReference type="ChEBI" id="CHEBI:28938"/>
        <dbReference type="ChEBI" id="CHEBI:57453"/>
        <dbReference type="ChEBI" id="CHEBI:83100"/>
        <dbReference type="ChEBI" id="CHEBI:83143"/>
        <dbReference type="EC" id="2.1.2.10"/>
    </reaction>
</comment>
<comment type="subunit">
    <text evidence="1">The glycine cleavage system is composed of four proteins: P, T, L and H.</text>
</comment>
<comment type="similarity">
    <text evidence="1">Belongs to the GcvT family.</text>
</comment>
<name>GCST_NOSS1</name>
<proteinExistence type="inferred from homology"/>
<evidence type="ECO:0000255" key="1">
    <source>
        <dbReference type="HAMAP-Rule" id="MF_00259"/>
    </source>
</evidence>